<reference key="1">
    <citation type="journal article" date="2008" name="J. Bacteriol.">
        <title>The complete genome sequence of Escherichia coli DH10B: insights into the biology of a laboratory workhorse.</title>
        <authorList>
            <person name="Durfee T."/>
            <person name="Nelson R."/>
            <person name="Baldwin S."/>
            <person name="Plunkett G. III"/>
            <person name="Burland V."/>
            <person name="Mau B."/>
            <person name="Petrosino J.F."/>
            <person name="Qin X."/>
            <person name="Muzny D.M."/>
            <person name="Ayele M."/>
            <person name="Gibbs R.A."/>
            <person name="Csorgo B."/>
            <person name="Posfai G."/>
            <person name="Weinstock G.M."/>
            <person name="Blattner F.R."/>
        </authorList>
    </citation>
    <scope>NUCLEOTIDE SEQUENCE [LARGE SCALE GENOMIC DNA]</scope>
    <source>
        <strain>K12 / DH10B</strain>
    </source>
</reference>
<feature type="chain" id="PRO_0000379551" description="Putrescine aminotransferase">
    <location>
        <begin position="1"/>
        <end position="459"/>
    </location>
</feature>
<feature type="binding site" description="in other chain" evidence="1">
    <location>
        <begin position="150"/>
        <end position="151"/>
    </location>
    <ligand>
        <name>pyridoxal 5'-phosphate</name>
        <dbReference type="ChEBI" id="CHEBI:597326"/>
        <note>ligand shared between dimeric partners</note>
    </ligand>
</feature>
<feature type="binding site" description="in other chain" evidence="1">
    <location>
        <position position="274"/>
    </location>
    <ligand>
        <name>pyridoxal 5'-phosphate</name>
        <dbReference type="ChEBI" id="CHEBI:597326"/>
        <note>ligand shared between dimeric partners</note>
    </ligand>
</feature>
<feature type="binding site" evidence="1">
    <location>
        <position position="332"/>
    </location>
    <ligand>
        <name>pyridoxal 5'-phosphate</name>
        <dbReference type="ChEBI" id="CHEBI:597326"/>
        <note>ligand shared between dimeric partners</note>
    </ligand>
</feature>
<feature type="modified residue" description="N6-(pyridoxal phosphate)lysine" evidence="1">
    <location>
        <position position="300"/>
    </location>
</feature>
<proteinExistence type="inferred from homology"/>
<accession>B1XG77</accession>
<keyword id="KW-0032">Aminotransferase</keyword>
<keyword id="KW-0663">Pyridoxal phosphate</keyword>
<keyword id="KW-0808">Transferase</keyword>
<protein>
    <recommendedName>
        <fullName evidence="1">Putrescine aminotransferase</fullName>
        <shortName evidence="1">PAT</shortName>
        <shortName evidence="1">PATase</shortName>
        <ecNumber evidence="1">2.6.1.82</ecNumber>
    </recommendedName>
    <alternativeName>
        <fullName evidence="1">Cadaverine transaminase</fullName>
    </alternativeName>
    <alternativeName>
        <fullName evidence="1">Diamine transaminase</fullName>
        <ecNumber evidence="1">2.6.1.29</ecNumber>
    </alternativeName>
    <alternativeName>
        <fullName evidence="1">Putrescine transaminase</fullName>
    </alternativeName>
    <alternativeName>
        <fullName evidence="1">Putrescine--2-oxoglutaric acid transaminase</fullName>
    </alternativeName>
</protein>
<comment type="function">
    <text evidence="1">Catalyzes the aminotransferase reaction from putrescine to 2-oxoglutarate, leading to glutamate and 4-aminobutanal, which spontaneously cyclizes to form 1-pyrroline. This is the first step in one of two pathways for putrescine degradation, where putrescine is converted into 4-aminobutanoate (gamma-aminobutyrate or GABA) via 4-aminobutanal. Also functions as a cadaverine transaminase in a a L-lysine degradation pathway to succinate that proceeds via cadaverine, glutarate and L-2-hydroxyglutarate.</text>
</comment>
<comment type="catalytic activity">
    <reaction evidence="1">
        <text>an alkane-alpha,omega-diamine + 2-oxoglutarate = an omega-aminoaldehyde + L-glutamate</text>
        <dbReference type="Rhea" id="RHEA:18217"/>
        <dbReference type="Rhea" id="RHEA-COMP:9766"/>
        <dbReference type="Rhea" id="RHEA-COMP:12750"/>
        <dbReference type="ChEBI" id="CHEBI:16810"/>
        <dbReference type="ChEBI" id="CHEBI:29985"/>
        <dbReference type="ChEBI" id="CHEBI:70977"/>
        <dbReference type="ChEBI" id="CHEBI:133427"/>
        <dbReference type="EC" id="2.6.1.29"/>
    </reaction>
    <physiologicalReaction direction="left-to-right" evidence="1">
        <dbReference type="Rhea" id="RHEA:18218"/>
    </physiologicalReaction>
</comment>
<comment type="catalytic activity">
    <reaction evidence="1">
        <text>putrescine + 2-oxoglutarate = 1-pyrroline + L-glutamate + H2O</text>
        <dbReference type="Rhea" id="RHEA:12268"/>
        <dbReference type="ChEBI" id="CHEBI:15377"/>
        <dbReference type="ChEBI" id="CHEBI:16810"/>
        <dbReference type="ChEBI" id="CHEBI:29985"/>
        <dbReference type="ChEBI" id="CHEBI:36781"/>
        <dbReference type="ChEBI" id="CHEBI:326268"/>
        <dbReference type="EC" id="2.6.1.82"/>
    </reaction>
    <physiologicalReaction direction="left-to-right" evidence="1">
        <dbReference type="Rhea" id="RHEA:12269"/>
    </physiologicalReaction>
</comment>
<comment type="catalytic activity">
    <reaction evidence="1">
        <text>cadaverine + 2-oxoglutarate = 5-aminopentanal + L-glutamate</text>
        <dbReference type="Rhea" id="RHEA:61624"/>
        <dbReference type="ChEBI" id="CHEBI:16810"/>
        <dbReference type="ChEBI" id="CHEBI:29985"/>
        <dbReference type="ChEBI" id="CHEBI:58384"/>
        <dbReference type="ChEBI" id="CHEBI:144896"/>
    </reaction>
    <physiologicalReaction direction="left-to-right" evidence="1">
        <dbReference type="Rhea" id="RHEA:61625"/>
    </physiologicalReaction>
</comment>
<comment type="cofactor">
    <cofactor evidence="1">
        <name>pyridoxal 5'-phosphate</name>
        <dbReference type="ChEBI" id="CHEBI:597326"/>
    </cofactor>
</comment>
<comment type="pathway">
    <text evidence="1">Amine and polyamine degradation; putrescine degradation; 4-aminobutanal from putrescine (transaminase route): step 1/1.</text>
</comment>
<comment type="similarity">
    <text evidence="1">Belongs to the class-III pyridoxal-phosphate-dependent aminotransferase family. Putrescine aminotransferase subfamily.</text>
</comment>
<comment type="sequence caution" evidence="2">
    <conflict type="erroneous initiation">
        <sequence resource="EMBL-CDS" id="ACB04157"/>
    </conflict>
</comment>
<gene>
    <name evidence="1" type="primary">patA</name>
    <name type="ordered locus">ECDH10B_3248</name>
</gene>
<organism>
    <name type="scientific">Escherichia coli (strain K12 / DH10B)</name>
    <dbReference type="NCBI Taxonomy" id="316385"/>
    <lineage>
        <taxon>Bacteria</taxon>
        <taxon>Pseudomonadati</taxon>
        <taxon>Pseudomonadota</taxon>
        <taxon>Gammaproteobacteria</taxon>
        <taxon>Enterobacterales</taxon>
        <taxon>Enterobacteriaceae</taxon>
        <taxon>Escherichia</taxon>
    </lineage>
</organism>
<name>PAT_ECODH</name>
<dbReference type="EC" id="2.6.1.82" evidence="1"/>
<dbReference type="EC" id="2.6.1.29" evidence="1"/>
<dbReference type="EMBL" id="CP000948">
    <property type="protein sequence ID" value="ACB04157.1"/>
    <property type="status" value="ALT_INIT"/>
    <property type="molecule type" value="Genomic_DNA"/>
</dbReference>
<dbReference type="SMR" id="B1XG77"/>
<dbReference type="KEGG" id="ecd:ECDH10B_3248"/>
<dbReference type="HOGENOM" id="CLU_016922_10_0_6"/>
<dbReference type="UniPathway" id="UPA00188">
    <property type="reaction ID" value="UER00290"/>
</dbReference>
<dbReference type="GO" id="GO:0019161">
    <property type="term" value="F:diamine transaminase activity"/>
    <property type="evidence" value="ECO:0007669"/>
    <property type="project" value="UniProtKB-EC"/>
</dbReference>
<dbReference type="GO" id="GO:0042802">
    <property type="term" value="F:identical protein binding"/>
    <property type="evidence" value="ECO:0007669"/>
    <property type="project" value="TreeGrafter"/>
</dbReference>
<dbReference type="GO" id="GO:0033094">
    <property type="term" value="F:putrescine--2-oxoglutarate transaminase activity"/>
    <property type="evidence" value="ECO:0007669"/>
    <property type="project" value="UniProtKB-UniRule"/>
</dbReference>
<dbReference type="GO" id="GO:0030170">
    <property type="term" value="F:pyridoxal phosphate binding"/>
    <property type="evidence" value="ECO:0007669"/>
    <property type="project" value="UniProtKB-UniRule"/>
</dbReference>
<dbReference type="GO" id="GO:0019477">
    <property type="term" value="P:L-lysine catabolic process"/>
    <property type="evidence" value="ECO:0007669"/>
    <property type="project" value="UniProtKB-UniRule"/>
</dbReference>
<dbReference type="GO" id="GO:0009447">
    <property type="term" value="P:putrescine catabolic process"/>
    <property type="evidence" value="ECO:0007669"/>
    <property type="project" value="UniProtKB-UniRule"/>
</dbReference>
<dbReference type="CDD" id="cd00610">
    <property type="entry name" value="OAT_like"/>
    <property type="match status" value="1"/>
</dbReference>
<dbReference type="FunFam" id="3.40.640.10:FF:000004">
    <property type="entry name" value="Acetylornithine aminotransferase"/>
    <property type="match status" value="1"/>
</dbReference>
<dbReference type="Gene3D" id="3.90.1150.10">
    <property type="entry name" value="Aspartate Aminotransferase, domain 1"/>
    <property type="match status" value="1"/>
</dbReference>
<dbReference type="Gene3D" id="3.40.640.10">
    <property type="entry name" value="Type I PLP-dependent aspartate aminotransferase-like (Major domain)"/>
    <property type="match status" value="1"/>
</dbReference>
<dbReference type="HAMAP" id="MF_01276">
    <property type="entry name" value="Putres_aminotrans_3"/>
    <property type="match status" value="1"/>
</dbReference>
<dbReference type="InterPro" id="IPR005814">
    <property type="entry name" value="Aminotrans_3"/>
</dbReference>
<dbReference type="InterPro" id="IPR049704">
    <property type="entry name" value="Aminotrans_3_PPA_site"/>
</dbReference>
<dbReference type="InterPro" id="IPR050103">
    <property type="entry name" value="Class-III_PLP-dep_AT"/>
</dbReference>
<dbReference type="InterPro" id="IPR017747">
    <property type="entry name" value="Putrescine_aminotransferase"/>
</dbReference>
<dbReference type="InterPro" id="IPR015424">
    <property type="entry name" value="PyrdxlP-dep_Trfase"/>
</dbReference>
<dbReference type="InterPro" id="IPR015421">
    <property type="entry name" value="PyrdxlP-dep_Trfase_major"/>
</dbReference>
<dbReference type="InterPro" id="IPR015422">
    <property type="entry name" value="PyrdxlP-dep_Trfase_small"/>
</dbReference>
<dbReference type="NCBIfam" id="NF008570">
    <property type="entry name" value="PRK11522.1"/>
    <property type="match status" value="1"/>
</dbReference>
<dbReference type="NCBIfam" id="TIGR03372">
    <property type="entry name" value="putres_am_tran"/>
    <property type="match status" value="1"/>
</dbReference>
<dbReference type="PANTHER" id="PTHR11986">
    <property type="entry name" value="AMINOTRANSFERASE CLASS III"/>
    <property type="match status" value="1"/>
</dbReference>
<dbReference type="PANTHER" id="PTHR11986:SF112">
    <property type="entry name" value="PUTRESCINE AMINOTRANSFERASE"/>
    <property type="match status" value="1"/>
</dbReference>
<dbReference type="Pfam" id="PF00202">
    <property type="entry name" value="Aminotran_3"/>
    <property type="match status" value="1"/>
</dbReference>
<dbReference type="PIRSF" id="PIRSF000521">
    <property type="entry name" value="Transaminase_4ab_Lys_Orn"/>
    <property type="match status" value="1"/>
</dbReference>
<dbReference type="SUPFAM" id="SSF53383">
    <property type="entry name" value="PLP-dependent transferases"/>
    <property type="match status" value="1"/>
</dbReference>
<dbReference type="PROSITE" id="PS00600">
    <property type="entry name" value="AA_TRANSFER_CLASS_3"/>
    <property type="match status" value="1"/>
</dbReference>
<evidence type="ECO:0000255" key="1">
    <source>
        <dbReference type="HAMAP-Rule" id="MF_01276"/>
    </source>
</evidence>
<evidence type="ECO:0000305" key="2"/>
<sequence length="459" mass="49661">MNRLPSSASALACSAHALNLIEKRTLDHEEMKALNREVIEYFKEHVNPGFLEYRKSVTAGGDYGAVEWQAGSLNTLVDTQGQEFIDCLGGFGIFNVGHRNPVVVSAVQNQLAKQPLHSQELLDPLRAMLAKTLAALTPGKLKYSFFCNSGTESVEAALKLAKAYQSPRGKFTFIATSGAFHGKSLGALSATAKSTFRKPFMPLLPGFRHVPFGNIEAMRTALNECKKTGDDVAAVILEPIQGEGGVILPPPGYLTAVRKLCDEFGALMILDEVQTGMGRTGKMFACEHENVQPDILCLAKALGGGVMPIGATIATEEVFSVLFDNPFLHTTTFGGNPLACAAALATINVLLEQNLPAQAEQKGDMLLDGFRQLAREYPDLVQEARGKGMLMAIEFVDNEIGYNFASEMFRQRVLVAGTLNNAKTIRIEPPLTLTIEQCELVIKAARKALAAMRVSVEEA</sequence>